<comment type="function">
    <text evidence="1">Catalyzes the attachment of tyrosine to tRNA(Tyr) in a two-step reaction: tyrosine is first activated by ATP to form Tyr-AMP and then transferred to the acceptor end of tRNA(Tyr).</text>
</comment>
<comment type="catalytic activity">
    <reaction evidence="1">
        <text>tRNA(Tyr) + L-tyrosine + ATP = L-tyrosyl-tRNA(Tyr) + AMP + diphosphate + H(+)</text>
        <dbReference type="Rhea" id="RHEA:10220"/>
        <dbReference type="Rhea" id="RHEA-COMP:9706"/>
        <dbReference type="Rhea" id="RHEA-COMP:9707"/>
        <dbReference type="ChEBI" id="CHEBI:15378"/>
        <dbReference type="ChEBI" id="CHEBI:30616"/>
        <dbReference type="ChEBI" id="CHEBI:33019"/>
        <dbReference type="ChEBI" id="CHEBI:58315"/>
        <dbReference type="ChEBI" id="CHEBI:78442"/>
        <dbReference type="ChEBI" id="CHEBI:78536"/>
        <dbReference type="ChEBI" id="CHEBI:456215"/>
        <dbReference type="EC" id="6.1.1.1"/>
    </reaction>
</comment>
<comment type="subunit">
    <text evidence="1">Homodimer.</text>
</comment>
<comment type="subcellular location">
    <subcellularLocation>
        <location evidence="1">Cytoplasm</location>
    </subcellularLocation>
</comment>
<comment type="similarity">
    <text evidence="1">Belongs to the class-I aminoacyl-tRNA synthetase family. TyrS type 2 subfamily.</text>
</comment>
<accession>Q4K517</accession>
<organism>
    <name type="scientific">Pseudomonas fluorescens (strain ATCC BAA-477 / NRRL B-23932 / Pf-5)</name>
    <dbReference type="NCBI Taxonomy" id="220664"/>
    <lineage>
        <taxon>Bacteria</taxon>
        <taxon>Pseudomonadati</taxon>
        <taxon>Pseudomonadota</taxon>
        <taxon>Gammaproteobacteria</taxon>
        <taxon>Pseudomonadales</taxon>
        <taxon>Pseudomonadaceae</taxon>
        <taxon>Pseudomonas</taxon>
    </lineage>
</organism>
<feature type="chain" id="PRO_0000236751" description="Tyrosine--tRNA ligase">
    <location>
        <begin position="1"/>
        <end position="399"/>
    </location>
</feature>
<feature type="domain" description="S4 RNA-binding" evidence="1">
    <location>
        <begin position="336"/>
        <end position="396"/>
    </location>
</feature>
<feature type="short sequence motif" description="'HIGH' region">
    <location>
        <begin position="42"/>
        <end position="51"/>
    </location>
</feature>
<feature type="short sequence motif" description="'KMSKS' region">
    <location>
        <begin position="226"/>
        <end position="230"/>
    </location>
</feature>
<feature type="binding site" evidence="1">
    <location>
        <position position="229"/>
    </location>
    <ligand>
        <name>ATP</name>
        <dbReference type="ChEBI" id="CHEBI:30616"/>
    </ligand>
</feature>
<proteinExistence type="inferred from homology"/>
<name>SYY_PSEF5</name>
<gene>
    <name evidence="1" type="primary">tyrS</name>
    <name type="ordered locus">PFL_5607</name>
</gene>
<dbReference type="EC" id="6.1.1.1" evidence="1"/>
<dbReference type="EMBL" id="CP000076">
    <property type="protein sequence ID" value="AAY94800.1"/>
    <property type="molecule type" value="Genomic_DNA"/>
</dbReference>
<dbReference type="RefSeq" id="WP_011063786.1">
    <property type="nucleotide sequence ID" value="NC_004129.6"/>
</dbReference>
<dbReference type="SMR" id="Q4K517"/>
<dbReference type="STRING" id="220664.PFL_5607"/>
<dbReference type="KEGG" id="pfl:PFL_5607"/>
<dbReference type="PATRIC" id="fig|220664.5.peg.5719"/>
<dbReference type="eggNOG" id="COG0162">
    <property type="taxonomic scope" value="Bacteria"/>
</dbReference>
<dbReference type="HOGENOM" id="CLU_024003_5_0_6"/>
<dbReference type="Proteomes" id="UP000008540">
    <property type="component" value="Chromosome"/>
</dbReference>
<dbReference type="GO" id="GO:0005829">
    <property type="term" value="C:cytosol"/>
    <property type="evidence" value="ECO:0007669"/>
    <property type="project" value="TreeGrafter"/>
</dbReference>
<dbReference type="GO" id="GO:0005524">
    <property type="term" value="F:ATP binding"/>
    <property type="evidence" value="ECO:0007669"/>
    <property type="project" value="UniProtKB-UniRule"/>
</dbReference>
<dbReference type="GO" id="GO:0003723">
    <property type="term" value="F:RNA binding"/>
    <property type="evidence" value="ECO:0007669"/>
    <property type="project" value="UniProtKB-KW"/>
</dbReference>
<dbReference type="GO" id="GO:0004831">
    <property type="term" value="F:tyrosine-tRNA ligase activity"/>
    <property type="evidence" value="ECO:0007669"/>
    <property type="project" value="UniProtKB-UniRule"/>
</dbReference>
<dbReference type="GO" id="GO:0006437">
    <property type="term" value="P:tyrosyl-tRNA aminoacylation"/>
    <property type="evidence" value="ECO:0007669"/>
    <property type="project" value="UniProtKB-UniRule"/>
</dbReference>
<dbReference type="CDD" id="cd00165">
    <property type="entry name" value="S4"/>
    <property type="match status" value="1"/>
</dbReference>
<dbReference type="CDD" id="cd00805">
    <property type="entry name" value="TyrRS_core"/>
    <property type="match status" value="1"/>
</dbReference>
<dbReference type="FunFam" id="1.10.240.10:FF:000006">
    <property type="entry name" value="Tyrosine--tRNA ligase"/>
    <property type="match status" value="1"/>
</dbReference>
<dbReference type="FunFam" id="3.40.50.620:FF:000061">
    <property type="entry name" value="Tyrosine--tRNA ligase"/>
    <property type="match status" value="1"/>
</dbReference>
<dbReference type="Gene3D" id="3.40.50.620">
    <property type="entry name" value="HUPs"/>
    <property type="match status" value="1"/>
</dbReference>
<dbReference type="Gene3D" id="3.10.290.10">
    <property type="entry name" value="RNA-binding S4 domain"/>
    <property type="match status" value="1"/>
</dbReference>
<dbReference type="Gene3D" id="1.10.240.10">
    <property type="entry name" value="Tyrosyl-Transfer RNA Synthetase"/>
    <property type="match status" value="1"/>
</dbReference>
<dbReference type="HAMAP" id="MF_02007">
    <property type="entry name" value="Tyr_tRNA_synth_type2"/>
    <property type="match status" value="1"/>
</dbReference>
<dbReference type="InterPro" id="IPR001412">
    <property type="entry name" value="aa-tRNA-synth_I_CS"/>
</dbReference>
<dbReference type="InterPro" id="IPR002305">
    <property type="entry name" value="aa-tRNA-synth_Ic"/>
</dbReference>
<dbReference type="InterPro" id="IPR014729">
    <property type="entry name" value="Rossmann-like_a/b/a_fold"/>
</dbReference>
<dbReference type="InterPro" id="IPR002942">
    <property type="entry name" value="S4_RNA-bd"/>
</dbReference>
<dbReference type="InterPro" id="IPR036986">
    <property type="entry name" value="S4_RNA-bd_sf"/>
</dbReference>
<dbReference type="InterPro" id="IPR002307">
    <property type="entry name" value="Tyr-tRNA-ligase"/>
</dbReference>
<dbReference type="InterPro" id="IPR024088">
    <property type="entry name" value="Tyr-tRNA-ligase_bac-type"/>
</dbReference>
<dbReference type="InterPro" id="IPR024108">
    <property type="entry name" value="Tyr-tRNA-ligase_bac_2"/>
</dbReference>
<dbReference type="NCBIfam" id="TIGR00234">
    <property type="entry name" value="tyrS"/>
    <property type="match status" value="1"/>
</dbReference>
<dbReference type="PANTHER" id="PTHR11766:SF1">
    <property type="entry name" value="TYROSINE--TRNA LIGASE"/>
    <property type="match status" value="1"/>
</dbReference>
<dbReference type="PANTHER" id="PTHR11766">
    <property type="entry name" value="TYROSYL-TRNA SYNTHETASE"/>
    <property type="match status" value="1"/>
</dbReference>
<dbReference type="Pfam" id="PF01479">
    <property type="entry name" value="S4"/>
    <property type="match status" value="1"/>
</dbReference>
<dbReference type="Pfam" id="PF00579">
    <property type="entry name" value="tRNA-synt_1b"/>
    <property type="match status" value="1"/>
</dbReference>
<dbReference type="PRINTS" id="PR01040">
    <property type="entry name" value="TRNASYNTHTYR"/>
</dbReference>
<dbReference type="SUPFAM" id="SSF55174">
    <property type="entry name" value="Alpha-L RNA-binding motif"/>
    <property type="match status" value="1"/>
</dbReference>
<dbReference type="SUPFAM" id="SSF52374">
    <property type="entry name" value="Nucleotidylyl transferase"/>
    <property type="match status" value="1"/>
</dbReference>
<dbReference type="PROSITE" id="PS00178">
    <property type="entry name" value="AA_TRNA_LIGASE_I"/>
    <property type="match status" value="1"/>
</dbReference>
<dbReference type="PROSITE" id="PS50889">
    <property type="entry name" value="S4"/>
    <property type="match status" value="1"/>
</dbReference>
<sequence>MKSVEEQLALIKRGAEELLVESELIEKLKRGEPLRIKAGFDPTAPDLHLGHTVLINKLRQFQDLGHQVIFLIGDFTGMIGDPSGKSATRPPLTREQVLENAETYKSQVFKILDPAKTEVAFNSTWMDKMGPADFIRLTSQYTVARMLERDDFDKRYSTNQPIAIHEFLYPLVQGYDSVALRADVELGGTDQKFNLLMGRELQRGYGQEAQCILTMPLLEGLDGVKKMSKSLGNYVGIQEAPGVMYGKLVSIPDALMWRYFELLSFRSMDEINAFKADVDAGANPRDIKIKLAEEIVARFHGEEAAANAHRAAGNRMKDGELPDDLPEIELVAAEDMPIAAVLNKAGLVKNAAMARDLLGSGGVRVDGEVVDRTYIYAVGSTHVCQAGRKAFARITLKSE</sequence>
<reference key="1">
    <citation type="journal article" date="2005" name="Nat. Biotechnol.">
        <title>Complete genome sequence of the plant commensal Pseudomonas fluorescens Pf-5.</title>
        <authorList>
            <person name="Paulsen I.T."/>
            <person name="Press C.M."/>
            <person name="Ravel J."/>
            <person name="Kobayashi D.Y."/>
            <person name="Myers G.S.A."/>
            <person name="Mavrodi D.V."/>
            <person name="DeBoy R.T."/>
            <person name="Seshadri R."/>
            <person name="Ren Q."/>
            <person name="Madupu R."/>
            <person name="Dodson R.J."/>
            <person name="Durkin A.S."/>
            <person name="Brinkac L.M."/>
            <person name="Daugherty S.C."/>
            <person name="Sullivan S.A."/>
            <person name="Rosovitz M.J."/>
            <person name="Gwinn M.L."/>
            <person name="Zhou L."/>
            <person name="Schneider D.J."/>
            <person name="Cartinhour S.W."/>
            <person name="Nelson W.C."/>
            <person name="Weidman J."/>
            <person name="Watkins K."/>
            <person name="Tran K."/>
            <person name="Khouri H."/>
            <person name="Pierson E.A."/>
            <person name="Pierson L.S. III"/>
            <person name="Thomashow L.S."/>
            <person name="Loper J.E."/>
        </authorList>
    </citation>
    <scope>NUCLEOTIDE SEQUENCE [LARGE SCALE GENOMIC DNA]</scope>
    <source>
        <strain>ATCC BAA-477 / NRRL B-23932 / Pf-5</strain>
    </source>
</reference>
<keyword id="KW-0030">Aminoacyl-tRNA synthetase</keyword>
<keyword id="KW-0067">ATP-binding</keyword>
<keyword id="KW-0963">Cytoplasm</keyword>
<keyword id="KW-0436">Ligase</keyword>
<keyword id="KW-0547">Nucleotide-binding</keyword>
<keyword id="KW-0648">Protein biosynthesis</keyword>
<keyword id="KW-0694">RNA-binding</keyword>
<evidence type="ECO:0000255" key="1">
    <source>
        <dbReference type="HAMAP-Rule" id="MF_02007"/>
    </source>
</evidence>
<protein>
    <recommendedName>
        <fullName evidence="1">Tyrosine--tRNA ligase</fullName>
        <ecNumber evidence="1">6.1.1.1</ecNumber>
    </recommendedName>
    <alternativeName>
        <fullName evidence="1">Tyrosyl-tRNA synthetase</fullName>
        <shortName evidence="1">TyrRS</shortName>
    </alternativeName>
</protein>